<proteinExistence type="inferred from homology"/>
<dbReference type="EMBL" id="BX569689">
    <property type="protein sequence ID" value="CAE06781.1"/>
    <property type="molecule type" value="Genomic_DNA"/>
</dbReference>
<dbReference type="RefSeq" id="WP_006172424.1">
    <property type="nucleotide sequence ID" value="NC_005070.1"/>
</dbReference>
<dbReference type="SMR" id="Q7U9J0"/>
<dbReference type="STRING" id="84588.SYNW0266"/>
<dbReference type="KEGG" id="syw:SYNW0266"/>
<dbReference type="eggNOG" id="ENOG5033CII">
    <property type="taxonomic scope" value="Bacteria"/>
</dbReference>
<dbReference type="HOGENOM" id="CLU_212150_0_0_3"/>
<dbReference type="BioCyc" id="MetaCyc:TX72_RS01330-MONOMER"/>
<dbReference type="Proteomes" id="UP000001422">
    <property type="component" value="Chromosome"/>
</dbReference>
<dbReference type="GO" id="GO:0009539">
    <property type="term" value="C:photosystem II reaction center"/>
    <property type="evidence" value="ECO:0007669"/>
    <property type="project" value="InterPro"/>
</dbReference>
<dbReference type="GO" id="GO:0031676">
    <property type="term" value="C:plasma membrane-derived thylakoid membrane"/>
    <property type="evidence" value="ECO:0007669"/>
    <property type="project" value="UniProtKB-SubCell"/>
</dbReference>
<dbReference type="GO" id="GO:0015979">
    <property type="term" value="P:photosynthesis"/>
    <property type="evidence" value="ECO:0007669"/>
    <property type="project" value="UniProtKB-UniRule"/>
</dbReference>
<dbReference type="HAMAP" id="MF_01316">
    <property type="entry name" value="PSII_PsbI"/>
    <property type="match status" value="1"/>
</dbReference>
<dbReference type="InterPro" id="IPR003686">
    <property type="entry name" value="PSII_PsbI"/>
</dbReference>
<dbReference type="InterPro" id="IPR037271">
    <property type="entry name" value="PSII_PsbI_sf"/>
</dbReference>
<dbReference type="NCBIfam" id="NF002735">
    <property type="entry name" value="PRK02655.1"/>
    <property type="match status" value="1"/>
</dbReference>
<dbReference type="PANTHER" id="PTHR35772">
    <property type="entry name" value="PHOTOSYSTEM II REACTION CENTER PROTEIN I"/>
    <property type="match status" value="1"/>
</dbReference>
<dbReference type="PANTHER" id="PTHR35772:SF1">
    <property type="entry name" value="PHOTOSYSTEM II REACTION CENTER PROTEIN I"/>
    <property type="match status" value="1"/>
</dbReference>
<dbReference type="Pfam" id="PF02532">
    <property type="entry name" value="PsbI"/>
    <property type="match status" value="1"/>
</dbReference>
<dbReference type="SUPFAM" id="SSF161041">
    <property type="entry name" value="Photosystem II reaction center protein I, PsbI"/>
    <property type="match status" value="1"/>
</dbReference>
<sequence length="39" mass="4414">MLALKISVYSVVFFFIGIFVFGFLASDPSRTPSRKDLED</sequence>
<feature type="chain" id="PRO_5000096119" description="Photosystem II reaction center protein I">
    <location>
        <begin position="1"/>
        <end position="39"/>
    </location>
</feature>
<feature type="transmembrane region" description="Helical" evidence="1">
    <location>
        <begin position="6"/>
        <end position="26"/>
    </location>
</feature>
<keyword id="KW-0472">Membrane</keyword>
<keyword id="KW-0602">Photosynthesis</keyword>
<keyword id="KW-0604">Photosystem II</keyword>
<keyword id="KW-0674">Reaction center</keyword>
<keyword id="KW-0793">Thylakoid</keyword>
<keyword id="KW-0812">Transmembrane</keyword>
<keyword id="KW-1133">Transmembrane helix</keyword>
<reference key="1">
    <citation type="journal article" date="2003" name="Nature">
        <title>The genome of a motile marine Synechococcus.</title>
        <authorList>
            <person name="Palenik B."/>
            <person name="Brahamsha B."/>
            <person name="Larimer F.W."/>
            <person name="Land M.L."/>
            <person name="Hauser L."/>
            <person name="Chain P."/>
            <person name="Lamerdin J.E."/>
            <person name="Regala W."/>
            <person name="Allen E.E."/>
            <person name="McCarren J."/>
            <person name="Paulsen I.T."/>
            <person name="Dufresne A."/>
            <person name="Partensky F."/>
            <person name="Webb E.A."/>
            <person name="Waterbury J."/>
        </authorList>
    </citation>
    <scope>NUCLEOTIDE SEQUENCE [LARGE SCALE GENOMIC DNA]</scope>
    <source>
        <strain>WH8102</strain>
    </source>
</reference>
<evidence type="ECO:0000255" key="1">
    <source>
        <dbReference type="HAMAP-Rule" id="MF_01316"/>
    </source>
</evidence>
<accession>Q7U9J0</accession>
<name>PSBI_PARMW</name>
<comment type="function">
    <text evidence="1">One of the components of the core complex of photosystem II (PSII), required for its stability and/or assembly. PSII is a light-driven water:plastoquinone oxidoreductase that uses light energy to abstract electrons from H(2)O, generating O(2) and a proton gradient subsequently used for ATP formation. It consists of a core antenna complex that captures photons, and an electron transfer chain that converts photonic excitation into a charge separation.</text>
</comment>
<comment type="subunit">
    <text evidence="1">PSII is composed of 1 copy each of membrane proteins PsbA, PsbB, PsbC, PsbD, PsbE, PsbF, PsbH, PsbI, PsbJ, PsbK, PsbL, PsbM, PsbT, PsbX, PsbY, PsbZ, Psb30/Ycf12, peripheral proteins PsbO, CyanoQ (PsbQ), PsbU, PsbV and a large number of cofactors. It forms dimeric complexes.</text>
</comment>
<comment type="subcellular location">
    <subcellularLocation>
        <location evidence="1">Cellular thylakoid membrane</location>
        <topology evidence="1">Single-pass membrane protein</topology>
    </subcellularLocation>
</comment>
<comment type="similarity">
    <text evidence="1">Belongs to the PsbI family.</text>
</comment>
<protein>
    <recommendedName>
        <fullName evidence="1">Photosystem II reaction center protein I</fullName>
        <shortName evidence="1">PSII-I</shortName>
    </recommendedName>
    <alternativeName>
        <fullName evidence="1">PSII 4.4 kDa protein</fullName>
    </alternativeName>
</protein>
<organism>
    <name type="scientific">Parasynechococcus marenigrum (strain WH8102)</name>
    <dbReference type="NCBI Taxonomy" id="84588"/>
    <lineage>
        <taxon>Bacteria</taxon>
        <taxon>Bacillati</taxon>
        <taxon>Cyanobacteriota</taxon>
        <taxon>Cyanophyceae</taxon>
        <taxon>Synechococcales</taxon>
        <taxon>Prochlorococcaceae</taxon>
        <taxon>Parasynechococcus</taxon>
        <taxon>Parasynechococcus marenigrum</taxon>
    </lineage>
</organism>
<gene>
    <name evidence="1" type="primary">psbI</name>
    <name type="ordered locus">SYNW0266</name>
</gene>